<organism>
    <name type="scientific">Homo sapiens</name>
    <name type="common">Human</name>
    <dbReference type="NCBI Taxonomy" id="9606"/>
    <lineage>
        <taxon>Eukaryota</taxon>
        <taxon>Metazoa</taxon>
        <taxon>Chordata</taxon>
        <taxon>Craniata</taxon>
        <taxon>Vertebrata</taxon>
        <taxon>Euteleostomi</taxon>
        <taxon>Mammalia</taxon>
        <taxon>Eutheria</taxon>
        <taxon>Euarchontoglires</taxon>
        <taxon>Primates</taxon>
        <taxon>Haplorrhini</taxon>
        <taxon>Catarrhini</taxon>
        <taxon>Hominidae</taxon>
        <taxon>Homo</taxon>
    </lineage>
</organism>
<evidence type="ECO:0000250" key="1">
    <source>
        <dbReference type="UniProtKB" id="P87108"/>
    </source>
</evidence>
<evidence type="ECO:0000269" key="2">
    <source>
    </source>
</evidence>
<evidence type="ECO:0000269" key="3">
    <source>
    </source>
</evidence>
<evidence type="ECO:0000269" key="4">
    <source>
    </source>
</evidence>
<evidence type="ECO:0000269" key="5">
    <source>
    </source>
</evidence>
<evidence type="ECO:0000269" key="6">
    <source>
    </source>
</evidence>
<evidence type="ECO:0000305" key="7"/>
<reference key="1">
    <citation type="journal article" date="1999" name="Genomics">
        <title>The human family of deafness/dystonia peptide (DDP) related mitochondrial import proteins.</title>
        <authorList>
            <person name="Jin H."/>
            <person name="Kendall E."/>
            <person name="Freeman T.C."/>
            <person name="Roberts R.G."/>
            <person name="Vetrie D.L.P."/>
        </authorList>
    </citation>
    <scope>NUCLEOTIDE SEQUENCE [MRNA]</scope>
</reference>
<reference key="2">
    <citation type="journal article" date="1999" name="FEBS Lett.">
        <title>The mitochondrial TIM22 preprotein translocase is highly conserved throughout the eukaryotic kingdom.</title>
        <authorList>
            <person name="Bauer M.F."/>
            <person name="Rothbauer U."/>
            <person name="Muehlenbein N."/>
            <person name="Smith R.J.H."/>
            <person name="Gerbitz K.-D."/>
            <person name="Neupert W."/>
            <person name="Brunner M."/>
            <person name="Hofmann S."/>
        </authorList>
    </citation>
    <scope>NUCLEOTIDE SEQUENCE [MRNA]</scope>
    <scope>TISSUE SPECIFICITY</scope>
</reference>
<reference key="3">
    <citation type="submission" date="1999-09" db="EMBL/GenBank/DDBJ databases">
        <title>A novel gene expressed in human pheochromocytoma.</title>
        <authorList>
            <person name="Peng Y."/>
            <person name="Li Y."/>
            <person name="Jia J."/>
            <person name="Xu S."/>
            <person name="Han Z."/>
            <person name="Fu G."/>
            <person name="Chen Z."/>
        </authorList>
    </citation>
    <scope>NUCLEOTIDE SEQUENCE [LARGE SCALE MRNA]</scope>
    <source>
        <tissue>Pheochromocytoma</tissue>
    </source>
</reference>
<reference key="4">
    <citation type="journal article" date="2004" name="Genome Res.">
        <title>The status, quality, and expansion of the NIH full-length cDNA project: the Mammalian Gene Collection (MGC).</title>
        <authorList>
            <consortium name="The MGC Project Team"/>
        </authorList>
    </citation>
    <scope>NUCLEOTIDE SEQUENCE [LARGE SCALE MRNA]</scope>
    <scope>VARIANT SER-90</scope>
    <source>
        <tissue>Bone marrow</tissue>
    </source>
</reference>
<reference key="5">
    <citation type="journal article" date="2001" name="J. Biol. Chem.">
        <title>Role of the deafness dystonia peptide 1 (DDP1) in import of human Tim23 into the inner membrane of mitochondria.</title>
        <authorList>
            <person name="Rothbauer U."/>
            <person name="Hofmann S."/>
            <person name="Muehlenbein N."/>
            <person name="Paschen S.A."/>
            <person name="Gerbitz K.-D."/>
            <person name="Neupert W."/>
            <person name="Brunner M."/>
            <person name="Bauer M.F."/>
        </authorList>
    </citation>
    <scope>SUBCELLULAR LOCATION</scope>
</reference>
<reference key="6">
    <citation type="journal article" date="2004" name="J. Biol. Chem.">
        <title>Organization and function of the small Tim complexes acting along the import pathway of metabolite carriers into mammalian mitochondria.</title>
        <authorList>
            <person name="Muehlenbein N."/>
            <person name="Hofmann S."/>
            <person name="Rothbauer U."/>
            <person name="Bauer M.F."/>
        </authorList>
    </citation>
    <scope>FUNCTION</scope>
    <scope>SUBCELLULAR LOCATION</scope>
    <scope>TISSUE SPECIFICITY</scope>
    <scope>INTERACTION WITH TIMM9; TIMM10A AND TIMM22</scope>
</reference>
<reference key="7">
    <citation type="journal article" date="2011" name="BMC Syst. Biol.">
        <title>Initial characterization of the human central proteome.</title>
        <authorList>
            <person name="Burkard T.R."/>
            <person name="Planyavsky M."/>
            <person name="Kaupe I."/>
            <person name="Breitwieser F.P."/>
            <person name="Buerckstuemmer T."/>
            <person name="Bennett K.L."/>
            <person name="Superti-Furga G."/>
            <person name="Colinge J."/>
        </authorList>
    </citation>
    <scope>IDENTIFICATION BY MASS SPECTROMETRY [LARGE SCALE ANALYSIS]</scope>
</reference>
<reference key="8">
    <citation type="journal article" date="2015" name="Proteomics">
        <title>N-terminome analysis of the human mitochondrial proteome.</title>
        <authorList>
            <person name="Vaca Jacome A.S."/>
            <person name="Rabilloud T."/>
            <person name="Schaeffer-Reiss C."/>
            <person name="Rompais M."/>
            <person name="Ayoub D."/>
            <person name="Lane L."/>
            <person name="Bairoch A."/>
            <person name="Van Dorsselaer A."/>
            <person name="Carapito C."/>
        </authorList>
    </citation>
    <scope>IDENTIFICATION BY MASS SPECTROMETRY [LARGE SCALE ANALYSIS]</scope>
</reference>
<reference key="9">
    <citation type="journal article" date="2017" name="Mol. Cell">
        <title>Acylglycerol kinase mutated in Sengers Syndrome is a subunit of the TIM22 protein translocase in mitochondria.</title>
        <authorList>
            <person name="Vukotic M."/>
            <person name="Nolte H."/>
            <person name="Koenig T."/>
            <person name="Saita S."/>
            <person name="Ananjew M."/>
            <person name="Krueger M."/>
            <person name="Tatsuta T."/>
            <person name="Langer T."/>
        </authorList>
    </citation>
    <scope>IDENTIFICATION IN THE TIM22 COMPLEX</scope>
</reference>
<comment type="function">
    <text evidence="4">Component of the TIM22 complex, a complex that mediates the import and insertion of multi-pass transmembrane proteins into the mitochondrial inner membrane. The TIM22 complex forms a twin-pore translocase that uses the membrane potential as the external driving force. In the TIM22 complex, it may act as a docking point for the soluble 70 kDa complex that guides the target proteins in transit through the aqueous mitochondrial intermembrane space.</text>
</comment>
<comment type="subunit">
    <text evidence="4 6">Component of the TIM22 complex, which core is composed of TIMM22, associated with TIMM10 (TIMM10A and/or TIMM10B), TIMM9, AGK and TIMM29 (PubMed:28712724).</text>
</comment>
<comment type="interaction">
    <interactant intactId="EBI-1200382">
        <id>Q9Y5J6</id>
    </interactant>
    <interactant intactId="EBI-711990">
        <id>O00303</id>
        <label>EIF3F</label>
    </interactant>
    <organismsDiffer>false</organismsDiffer>
    <experiments>3</experiments>
</comment>
<comment type="interaction">
    <interactant intactId="EBI-1200382">
        <id>Q9Y5J6</id>
    </interactant>
    <interactant intactId="EBI-740220">
        <id>O14964</id>
        <label>HGS</label>
    </interactant>
    <organismsDiffer>false</organismsDiffer>
    <experiments>3</experiments>
</comment>
<comment type="interaction">
    <interactant intactId="EBI-1200382">
        <id>Q9Y5J6</id>
    </interactant>
    <interactant intactId="EBI-6426443">
        <id>Q2WGJ6</id>
        <label>KLHL38</label>
    </interactant>
    <organismsDiffer>false</organismsDiffer>
    <experiments>3</experiments>
</comment>
<comment type="interaction">
    <interactant intactId="EBI-1200382">
        <id>Q9Y5J6</id>
    </interactant>
    <interactant intactId="EBI-11978579">
        <id>O95983-2</id>
        <label>MBD3</label>
    </interactant>
    <organismsDiffer>false</organismsDiffer>
    <experiments>3</experiments>
</comment>
<comment type="interaction">
    <interactant intactId="EBI-1200382">
        <id>Q9Y5J6</id>
    </interactant>
    <interactant intactId="EBI-8025850">
        <id>O14770-4</id>
        <label>MEIS2</label>
    </interactant>
    <organismsDiffer>false</organismsDiffer>
    <experiments>3</experiments>
</comment>
<comment type="interaction">
    <interactant intactId="EBI-1200382">
        <id>Q9Y5J6</id>
    </interactant>
    <interactant intactId="EBI-2462339">
        <id>Q96DH6</id>
        <label>MSI2</label>
    </interactant>
    <organismsDiffer>false</organismsDiffer>
    <experiments>2</experiments>
</comment>
<comment type="subcellular location">
    <subcellularLocation>
        <location evidence="3 4">Mitochondrion inner membrane</location>
        <topology evidence="3 4">Peripheral membrane protein</topology>
    </subcellularLocation>
</comment>
<comment type="tissue specificity">
    <text evidence="2 4">Ubiquitous, with highest expression in heart, kidney, liver and skeletal muscle.</text>
</comment>
<comment type="domain">
    <text evidence="1">The twin CX3C motif contains 4 conserved Cys residues that form 2 disulfide bonds in the mitochondrial intermembrane space. However, during the transit of TIMM10B from cytoplasm into mitochondrion, the Cys residues probably coordinate zinc, thereby preventing folding and allowing its transfer across mitochondrial outer membrane.</text>
</comment>
<comment type="similarity">
    <text evidence="7">Belongs to the small Tim family.</text>
</comment>
<proteinExistence type="evidence at protein level"/>
<name>T10B_HUMAN</name>
<keyword id="KW-0002">3D-structure</keyword>
<keyword id="KW-1015">Disulfide bond</keyword>
<keyword id="KW-0472">Membrane</keyword>
<keyword id="KW-0479">Metal-binding</keyword>
<keyword id="KW-0496">Mitochondrion</keyword>
<keyword id="KW-0999">Mitochondrion inner membrane</keyword>
<keyword id="KW-0653">Protein transport</keyword>
<keyword id="KW-1267">Proteomics identification</keyword>
<keyword id="KW-1185">Reference proteome</keyword>
<keyword id="KW-0811">Translocation</keyword>
<keyword id="KW-0813">Transport</keyword>
<keyword id="KW-0862">Zinc</keyword>
<gene>
    <name type="primary">TIMM10B</name>
    <name type="synonym">FXC1</name>
    <name type="synonym">TIM9B</name>
    <name type="synonym">TIMM9B</name>
</gene>
<dbReference type="EMBL" id="AF152355">
    <property type="protein sequence ID" value="AAF15105.1"/>
    <property type="molecule type" value="mRNA"/>
</dbReference>
<dbReference type="EMBL" id="AF150105">
    <property type="protein sequence ID" value="AAD40011.1"/>
    <property type="molecule type" value="mRNA"/>
</dbReference>
<dbReference type="EMBL" id="AF183415">
    <property type="protein sequence ID" value="AAG09684.1"/>
    <property type="molecule type" value="mRNA"/>
</dbReference>
<dbReference type="EMBL" id="BC011014">
    <property type="protein sequence ID" value="AAH11014.1"/>
    <property type="molecule type" value="mRNA"/>
</dbReference>
<dbReference type="CCDS" id="CCDS7766.1"/>
<dbReference type="RefSeq" id="NP_036324.1">
    <property type="nucleotide sequence ID" value="NM_012192.4"/>
</dbReference>
<dbReference type="PDB" id="7CGP">
    <property type="method" value="EM"/>
    <property type="resolution" value="3.70 A"/>
    <property type="chains" value="J=1-103"/>
</dbReference>
<dbReference type="PDBsum" id="7CGP"/>
<dbReference type="EMDB" id="EMD-9958"/>
<dbReference type="SMR" id="Q9Y5J6"/>
<dbReference type="BioGRID" id="117720">
    <property type="interactions" value="25"/>
</dbReference>
<dbReference type="ComplexPortal" id="CPX-6126">
    <property type="entry name" value="TIM9-TIM10-TIM10B mitochondrial intermembrane space protein transporter complex"/>
</dbReference>
<dbReference type="CORUM" id="Q9Y5J6"/>
<dbReference type="FunCoup" id="Q9Y5J6">
    <property type="interactions" value="615"/>
</dbReference>
<dbReference type="IntAct" id="Q9Y5J6">
    <property type="interactions" value="23"/>
</dbReference>
<dbReference type="STRING" id="9606.ENSP00000254616"/>
<dbReference type="GlyGen" id="Q9Y5J6">
    <property type="glycosylation" value="1 site, 1 O-linked glycan (1 site)"/>
</dbReference>
<dbReference type="iPTMnet" id="Q9Y5J6"/>
<dbReference type="PhosphoSitePlus" id="Q9Y5J6"/>
<dbReference type="BioMuta" id="TIMM10B"/>
<dbReference type="jPOST" id="Q9Y5J6"/>
<dbReference type="MassIVE" id="Q9Y5J6"/>
<dbReference type="PaxDb" id="9606-ENSP00000254616"/>
<dbReference type="PeptideAtlas" id="Q9Y5J6"/>
<dbReference type="ProteomicsDB" id="86421"/>
<dbReference type="Pumba" id="Q9Y5J6"/>
<dbReference type="TopDownProteomics" id="Q9Y5J6"/>
<dbReference type="Antibodypedia" id="23876">
    <property type="antibodies" value="101 antibodies from 20 providers"/>
</dbReference>
<dbReference type="DNASU" id="26515"/>
<dbReference type="Ensembl" id="ENST00000254616.11">
    <property type="protein sequence ID" value="ENSP00000254616.6"/>
    <property type="gene ID" value="ENSG00000132286.12"/>
</dbReference>
<dbReference type="Ensembl" id="ENST00000533379.1">
    <property type="protein sequence ID" value="ENSP00000436948.1"/>
    <property type="gene ID" value="ENSG00000132286.12"/>
</dbReference>
<dbReference type="GeneID" id="26515"/>
<dbReference type="KEGG" id="hsa:26515"/>
<dbReference type="MANE-Select" id="ENST00000254616.11">
    <property type="protein sequence ID" value="ENSP00000254616.6"/>
    <property type="RefSeq nucleotide sequence ID" value="NM_012192.4"/>
    <property type="RefSeq protein sequence ID" value="NP_036324.1"/>
</dbReference>
<dbReference type="UCSC" id="uc001mdn.5">
    <property type="organism name" value="human"/>
</dbReference>
<dbReference type="AGR" id="HGNC:4022"/>
<dbReference type="CTD" id="26515"/>
<dbReference type="GeneCards" id="TIMM10B"/>
<dbReference type="HGNC" id="HGNC:4022">
    <property type="gene designation" value="TIMM10B"/>
</dbReference>
<dbReference type="HPA" id="ENSG00000132286">
    <property type="expression patterns" value="Low tissue specificity"/>
</dbReference>
<dbReference type="MIM" id="607388">
    <property type="type" value="gene"/>
</dbReference>
<dbReference type="neXtProt" id="NX_Q9Y5J6"/>
<dbReference type="OpenTargets" id="ENSG00000132286"/>
<dbReference type="PharmGKB" id="PA28438"/>
<dbReference type="VEuPathDB" id="HostDB:ENSG00000132286"/>
<dbReference type="eggNOG" id="KOG3479">
    <property type="taxonomic scope" value="Eukaryota"/>
</dbReference>
<dbReference type="GeneTree" id="ENSGT00450000040326"/>
<dbReference type="HOGENOM" id="CLU_141397_2_2_1"/>
<dbReference type="InParanoid" id="Q9Y5J6"/>
<dbReference type="OMA" id="FNRCVDN"/>
<dbReference type="OrthoDB" id="1551503at2759"/>
<dbReference type="PAN-GO" id="Q9Y5J6">
    <property type="GO annotations" value="1 GO annotation based on evolutionary models"/>
</dbReference>
<dbReference type="PhylomeDB" id="Q9Y5J6"/>
<dbReference type="TreeFam" id="TF106188"/>
<dbReference type="PathwayCommons" id="Q9Y5J6"/>
<dbReference type="Reactome" id="R-HSA-1268020">
    <property type="pathway name" value="Mitochondrial protein import"/>
</dbReference>
<dbReference type="SignaLink" id="Q9Y5J6"/>
<dbReference type="BioGRID-ORCS" id="26515">
    <property type="hits" value="17 hits in 1160 CRISPR screens"/>
</dbReference>
<dbReference type="ChiTaRS" id="TIMM10B">
    <property type="organism name" value="human"/>
</dbReference>
<dbReference type="GeneWiki" id="FXC1"/>
<dbReference type="GenomeRNAi" id="26515"/>
<dbReference type="Pharos" id="Q9Y5J6">
    <property type="development level" value="Tdark"/>
</dbReference>
<dbReference type="PRO" id="PR:Q9Y5J6"/>
<dbReference type="Proteomes" id="UP000005640">
    <property type="component" value="Chromosome 11"/>
</dbReference>
<dbReference type="RNAct" id="Q9Y5J6">
    <property type="molecule type" value="protein"/>
</dbReference>
<dbReference type="Bgee" id="ENSG00000132286">
    <property type="expression patterns" value="Expressed in secondary oocyte and 188 other cell types or tissues"/>
</dbReference>
<dbReference type="ExpressionAtlas" id="Q9Y5J6">
    <property type="expression patterns" value="baseline and differential"/>
</dbReference>
<dbReference type="GO" id="GO:0005743">
    <property type="term" value="C:mitochondrial inner membrane"/>
    <property type="evidence" value="ECO:0000314"/>
    <property type="project" value="BHF-UCL"/>
</dbReference>
<dbReference type="GO" id="GO:0005758">
    <property type="term" value="C:mitochondrial intermembrane space"/>
    <property type="evidence" value="ECO:0000314"/>
    <property type="project" value="ComplexPortal"/>
</dbReference>
<dbReference type="GO" id="GO:0042719">
    <property type="term" value="C:mitochondrial intermembrane space protein transporter complex"/>
    <property type="evidence" value="ECO:0000314"/>
    <property type="project" value="BHF-UCL"/>
</dbReference>
<dbReference type="GO" id="GO:0005739">
    <property type="term" value="C:mitochondrion"/>
    <property type="evidence" value="ECO:0006056"/>
    <property type="project" value="FlyBase"/>
</dbReference>
<dbReference type="GO" id="GO:0042721">
    <property type="term" value="C:TIM22 mitochondrial import inner membrane insertion complex"/>
    <property type="evidence" value="ECO:0000314"/>
    <property type="project" value="UniProtKB"/>
</dbReference>
<dbReference type="GO" id="GO:0046872">
    <property type="term" value="F:metal ion binding"/>
    <property type="evidence" value="ECO:0007669"/>
    <property type="project" value="UniProtKB-KW"/>
</dbReference>
<dbReference type="GO" id="GO:0051082">
    <property type="term" value="F:unfolded protein binding"/>
    <property type="evidence" value="ECO:0000250"/>
    <property type="project" value="FlyBase"/>
</dbReference>
<dbReference type="GO" id="GO:0007160">
    <property type="term" value="P:cell-matrix adhesion"/>
    <property type="evidence" value="ECO:0000304"/>
    <property type="project" value="ProtInc"/>
</dbReference>
<dbReference type="GO" id="GO:0045039">
    <property type="term" value="P:protein insertion into mitochondrial inner membrane"/>
    <property type="evidence" value="ECO:0000250"/>
    <property type="project" value="FlyBase"/>
</dbReference>
<dbReference type="FunFam" id="1.10.287.810:FF:000006">
    <property type="entry name" value="mitochondrial import inner membrane translocase subunit Tim10 B"/>
    <property type="match status" value="1"/>
</dbReference>
<dbReference type="Gene3D" id="1.10.287.810">
    <property type="entry name" value="Mitochondrial import inner membrane translocase subunit tim13 like domains"/>
    <property type="match status" value="1"/>
</dbReference>
<dbReference type="InterPro" id="IPR050673">
    <property type="entry name" value="Mito_inner_translocase_sub"/>
</dbReference>
<dbReference type="InterPro" id="IPR004217">
    <property type="entry name" value="Tim10-like"/>
</dbReference>
<dbReference type="InterPro" id="IPR035427">
    <property type="entry name" value="Tim10-like_dom_sf"/>
</dbReference>
<dbReference type="PANTHER" id="PTHR13172">
    <property type="entry name" value="MITOCHONDRIAL IMPORT INNER MEMBRANE TRANSLOCASE SUBUNIT TIM9B"/>
    <property type="match status" value="1"/>
</dbReference>
<dbReference type="Pfam" id="PF02953">
    <property type="entry name" value="zf-Tim10_DDP"/>
    <property type="match status" value="1"/>
</dbReference>
<dbReference type="SUPFAM" id="SSF144122">
    <property type="entry name" value="Tim10-like"/>
    <property type="match status" value="1"/>
</dbReference>
<accession>Q9Y5J6</accession>
<accession>Q96FF3</accession>
<feature type="chain" id="PRO_0000193598" description="Mitochondrial import inner membrane translocase subunit Tim10 B">
    <location>
        <begin position="1"/>
        <end position="103"/>
    </location>
</feature>
<feature type="short sequence motif" description="Twin CX3C motif">
    <location>
        <begin position="28"/>
        <end position="52"/>
    </location>
</feature>
<feature type="disulfide bond" evidence="1">
    <location>
        <begin position="28"/>
        <end position="52"/>
    </location>
</feature>
<feature type="disulfide bond" evidence="1">
    <location>
        <begin position="32"/>
        <end position="48"/>
    </location>
</feature>
<feature type="sequence variant" id="VAR_061843" description="In dbSNP:rs60702727.">
    <original>A</original>
    <variation>S</variation>
    <location>
        <position position="66"/>
    </location>
</feature>
<feature type="sequence variant" id="VAR_025665" description="In dbSNP:rs17850713." evidence="5">
    <original>G</original>
    <variation>S</variation>
    <location>
        <position position="90"/>
    </location>
</feature>
<protein>
    <recommendedName>
        <fullName>Mitochondrial import inner membrane translocase subunit Tim10 B</fullName>
    </recommendedName>
    <alternativeName>
        <fullName>Fracture callus protein 1</fullName>
    </alternativeName>
    <alternativeName>
        <fullName>FxC1</fullName>
    </alternativeName>
    <alternativeName>
        <fullName>Mitochondrial import inner membrane translocase subunit Tim9 B</fullName>
    </alternativeName>
    <alternativeName>
        <fullName>TIMM10B</fullName>
        <shortName>Tim10b</shortName>
    </alternativeName>
</protein>
<sequence length="103" mass="11586">MERQQQQQQQLRNLRDFLLVYNRMTELCFQRCVPSLHHRALDAEEEACLHSCAGKLIHSNHRLMAAYVQLMPALVQRRIADYEAASAVPGVAAEQPGVSPSGS</sequence>